<keyword id="KW-0408">Iron</keyword>
<keyword id="KW-0411">Iron-sulfur</keyword>
<keyword id="KW-0479">Metal-binding</keyword>
<protein>
    <recommendedName>
        <fullName evidence="1">Iron-sulfur cluster insertion protein ErpA</fullName>
    </recommendedName>
</protein>
<accession>B8D910</accession>
<name>ERPA_BUCA5</name>
<comment type="function">
    <text evidence="1">Required for insertion of 4Fe-4S clusters for at least IspG.</text>
</comment>
<comment type="cofactor">
    <cofactor evidence="1">
        <name>iron-sulfur cluster</name>
        <dbReference type="ChEBI" id="CHEBI:30408"/>
    </cofactor>
    <text evidence="1">Binds 1 iron-sulfur cluster per subunit.</text>
</comment>
<comment type="subunit">
    <text evidence="1">Homodimer.</text>
</comment>
<comment type="similarity">
    <text evidence="1">Belongs to the HesB/IscA family.</text>
</comment>
<organism>
    <name type="scientific">Buchnera aphidicola subsp. Acyrthosiphon pisum (strain 5A)</name>
    <dbReference type="NCBI Taxonomy" id="563178"/>
    <lineage>
        <taxon>Bacteria</taxon>
        <taxon>Pseudomonadati</taxon>
        <taxon>Pseudomonadota</taxon>
        <taxon>Gammaproteobacteria</taxon>
        <taxon>Enterobacterales</taxon>
        <taxon>Erwiniaceae</taxon>
        <taxon>Buchnera</taxon>
    </lineage>
</organism>
<reference key="1">
    <citation type="journal article" date="2009" name="Science">
        <title>The dynamics and time scale of ongoing genomic erosion in symbiotic bacteria.</title>
        <authorList>
            <person name="Moran N.A."/>
            <person name="McLaughlin H.J."/>
            <person name="Sorek R."/>
        </authorList>
    </citation>
    <scope>NUCLEOTIDE SEQUENCE [LARGE SCALE GENOMIC DNA]</scope>
    <source>
        <strain>5A</strain>
    </source>
</reference>
<dbReference type="EMBL" id="CP001161">
    <property type="protein sequence ID" value="ACL30581.1"/>
    <property type="molecule type" value="Genomic_DNA"/>
</dbReference>
<dbReference type="RefSeq" id="WP_009874169.1">
    <property type="nucleotide sequence ID" value="NC_011833.1"/>
</dbReference>
<dbReference type="SMR" id="B8D910"/>
<dbReference type="KEGG" id="bap:BUAP5A_208"/>
<dbReference type="HOGENOM" id="CLU_069054_5_3_6"/>
<dbReference type="OrthoDB" id="9801228at2"/>
<dbReference type="Proteomes" id="UP000006904">
    <property type="component" value="Chromosome"/>
</dbReference>
<dbReference type="GO" id="GO:0005829">
    <property type="term" value="C:cytosol"/>
    <property type="evidence" value="ECO:0007669"/>
    <property type="project" value="TreeGrafter"/>
</dbReference>
<dbReference type="GO" id="GO:0051537">
    <property type="term" value="F:2 iron, 2 sulfur cluster binding"/>
    <property type="evidence" value="ECO:0007669"/>
    <property type="project" value="UniProtKB-ARBA"/>
</dbReference>
<dbReference type="GO" id="GO:0051539">
    <property type="term" value="F:4 iron, 4 sulfur cluster binding"/>
    <property type="evidence" value="ECO:0007669"/>
    <property type="project" value="TreeGrafter"/>
</dbReference>
<dbReference type="GO" id="GO:0005506">
    <property type="term" value="F:iron ion binding"/>
    <property type="evidence" value="ECO:0007669"/>
    <property type="project" value="UniProtKB-UniRule"/>
</dbReference>
<dbReference type="GO" id="GO:0016226">
    <property type="term" value="P:iron-sulfur cluster assembly"/>
    <property type="evidence" value="ECO:0007669"/>
    <property type="project" value="UniProtKB-UniRule"/>
</dbReference>
<dbReference type="FunFam" id="2.60.300.12:FF:000002">
    <property type="entry name" value="Iron-sulfur cluster insertion protein ErpA"/>
    <property type="match status" value="1"/>
</dbReference>
<dbReference type="Gene3D" id="2.60.300.12">
    <property type="entry name" value="HesB-like domain"/>
    <property type="match status" value="1"/>
</dbReference>
<dbReference type="HAMAP" id="MF_01380">
    <property type="entry name" value="Fe_S_insert_ErpA"/>
    <property type="match status" value="1"/>
</dbReference>
<dbReference type="InterPro" id="IPR000361">
    <property type="entry name" value="FeS_biogenesis"/>
</dbReference>
<dbReference type="InterPro" id="IPR016092">
    <property type="entry name" value="FeS_cluster_insertion"/>
</dbReference>
<dbReference type="InterPro" id="IPR017870">
    <property type="entry name" value="FeS_cluster_insertion_CS"/>
</dbReference>
<dbReference type="InterPro" id="IPR023063">
    <property type="entry name" value="FeS_cluster_insertion_RrpA"/>
</dbReference>
<dbReference type="InterPro" id="IPR035903">
    <property type="entry name" value="HesB-like_dom_sf"/>
</dbReference>
<dbReference type="NCBIfam" id="TIGR00049">
    <property type="entry name" value="iron-sulfur cluster assembly accessory protein"/>
    <property type="match status" value="1"/>
</dbReference>
<dbReference type="NCBIfam" id="NF010147">
    <property type="entry name" value="PRK13623.1"/>
    <property type="match status" value="1"/>
</dbReference>
<dbReference type="PANTHER" id="PTHR43011">
    <property type="entry name" value="IRON-SULFUR CLUSTER ASSEMBLY 2 HOMOLOG, MITOCHONDRIAL"/>
    <property type="match status" value="1"/>
</dbReference>
<dbReference type="PANTHER" id="PTHR43011:SF1">
    <property type="entry name" value="IRON-SULFUR CLUSTER ASSEMBLY 2 HOMOLOG, MITOCHONDRIAL"/>
    <property type="match status" value="1"/>
</dbReference>
<dbReference type="Pfam" id="PF01521">
    <property type="entry name" value="Fe-S_biosyn"/>
    <property type="match status" value="1"/>
</dbReference>
<dbReference type="SUPFAM" id="SSF89360">
    <property type="entry name" value="HesB-like domain"/>
    <property type="match status" value="1"/>
</dbReference>
<dbReference type="PROSITE" id="PS01152">
    <property type="entry name" value="HESB"/>
    <property type="match status" value="1"/>
</dbReference>
<sequence length="114" mass="12832">MENAFKSHLQFTEKAIKKIKNLIEIEKNHDLKLRIYINGGGCSGFQYQFIFDTSINEDDIIITQSEVSLIIDPISLQYLYGGQIDYLENLEGSKFIVSNPNAKNTCGCGSSFSI</sequence>
<evidence type="ECO:0000255" key="1">
    <source>
        <dbReference type="HAMAP-Rule" id="MF_01380"/>
    </source>
</evidence>
<proteinExistence type="inferred from homology"/>
<feature type="chain" id="PRO_1000184199" description="Iron-sulfur cluster insertion protein ErpA">
    <location>
        <begin position="1"/>
        <end position="114"/>
    </location>
</feature>
<feature type="binding site" evidence="1">
    <location>
        <position position="42"/>
    </location>
    <ligand>
        <name>iron-sulfur cluster</name>
        <dbReference type="ChEBI" id="CHEBI:30408"/>
    </ligand>
</feature>
<feature type="binding site" evidence="1">
    <location>
        <position position="106"/>
    </location>
    <ligand>
        <name>iron-sulfur cluster</name>
        <dbReference type="ChEBI" id="CHEBI:30408"/>
    </ligand>
</feature>
<feature type="binding site" evidence="1">
    <location>
        <position position="108"/>
    </location>
    <ligand>
        <name>iron-sulfur cluster</name>
        <dbReference type="ChEBI" id="CHEBI:30408"/>
    </ligand>
</feature>
<gene>
    <name evidence="1" type="primary">erpA</name>
    <name type="ordered locus">BUAP5A_208</name>
</gene>